<keyword id="KW-0002">3D-structure</keyword>
<keyword id="KW-0903">Direct protein sequencing</keyword>
<keyword id="KW-0235">DNA replication</keyword>
<keyword id="KW-0239">DNA-directed DNA polymerase</keyword>
<keyword id="KW-0548">Nucleotidyltransferase</keyword>
<keyword id="KW-1185">Reference proteome</keyword>
<keyword id="KW-0808">Transferase</keyword>
<dbReference type="EC" id="2.7.7.7"/>
<dbReference type="EMBL" id="L04576">
    <property type="protein sequence ID" value="AAA23675.1"/>
    <property type="molecule type" value="Genomic_DNA"/>
</dbReference>
<dbReference type="EMBL" id="M94267">
    <property type="protein sequence ID" value="AAB59047.1"/>
    <property type="molecule type" value="Genomic_DNA"/>
</dbReference>
<dbReference type="EMBL" id="U82598">
    <property type="protein sequence ID" value="AAB40841.1"/>
    <property type="molecule type" value="Genomic_DNA"/>
</dbReference>
<dbReference type="EMBL" id="U00096">
    <property type="protein sequence ID" value="AAC73741.1"/>
    <property type="molecule type" value="Genomic_DNA"/>
</dbReference>
<dbReference type="EMBL" id="AP009048">
    <property type="protein sequence ID" value="BAA35287.1"/>
    <property type="molecule type" value="Genomic_DNA"/>
</dbReference>
<dbReference type="EMBL" id="M18277">
    <property type="status" value="NOT_ANNOTATED_CDS"/>
    <property type="molecule type" value="Genomic_DNA"/>
</dbReference>
<dbReference type="PIR" id="A45251">
    <property type="entry name" value="A45251"/>
</dbReference>
<dbReference type="RefSeq" id="NP_415173.1">
    <property type="nucleotide sequence ID" value="NC_000913.3"/>
</dbReference>
<dbReference type="RefSeq" id="WP_000620535.1">
    <property type="nucleotide sequence ID" value="NZ_SSZK01000037.1"/>
</dbReference>
<dbReference type="PDB" id="1JQJ">
    <property type="method" value="X-ray"/>
    <property type="resolution" value="2.90 A"/>
    <property type="chains" value="C/D=1-343"/>
</dbReference>
<dbReference type="PDB" id="1JQL">
    <property type="method" value="X-ray"/>
    <property type="resolution" value="2.50 A"/>
    <property type="chains" value="B=1-140"/>
</dbReference>
<dbReference type="PDB" id="1JR3">
    <property type="method" value="X-ray"/>
    <property type="resolution" value="2.70 A"/>
    <property type="chains" value="D=1-343"/>
</dbReference>
<dbReference type="PDB" id="1XXH">
    <property type="method" value="X-ray"/>
    <property type="resolution" value="3.45 A"/>
    <property type="chains" value="A/F=1-343"/>
</dbReference>
<dbReference type="PDB" id="1XXI">
    <property type="method" value="X-ray"/>
    <property type="resolution" value="4.10 A"/>
    <property type="chains" value="A/F=1-343"/>
</dbReference>
<dbReference type="PDB" id="3GLF">
    <property type="method" value="X-ray"/>
    <property type="resolution" value="3.39 A"/>
    <property type="chains" value="A/F=1-343"/>
</dbReference>
<dbReference type="PDB" id="3GLG">
    <property type="method" value="X-ray"/>
    <property type="resolution" value="3.25 A"/>
    <property type="chains" value="A/F=1-343"/>
</dbReference>
<dbReference type="PDB" id="3GLH">
    <property type="method" value="X-ray"/>
    <property type="resolution" value="3.89 A"/>
    <property type="chains" value="A/F/K=1-343"/>
</dbReference>
<dbReference type="PDB" id="3GLI">
    <property type="method" value="X-ray"/>
    <property type="resolution" value="3.50 A"/>
    <property type="chains" value="A/F=1-343"/>
</dbReference>
<dbReference type="PDB" id="8GIY">
    <property type="method" value="EM"/>
    <property type="resolution" value="3.70 A"/>
    <property type="chains" value="A=1-343"/>
</dbReference>
<dbReference type="PDB" id="8GIZ">
    <property type="method" value="EM"/>
    <property type="resolution" value="2.70 A"/>
    <property type="chains" value="A=1-343"/>
</dbReference>
<dbReference type="PDB" id="8GJ0">
    <property type="method" value="EM"/>
    <property type="resolution" value="2.90 A"/>
    <property type="chains" value="A=1-343"/>
</dbReference>
<dbReference type="PDB" id="8GJ1">
    <property type="method" value="EM"/>
    <property type="resolution" value="3.00 A"/>
    <property type="chains" value="A=1-343"/>
</dbReference>
<dbReference type="PDB" id="8GJ2">
    <property type="method" value="EM"/>
    <property type="resolution" value="2.60 A"/>
    <property type="chains" value="A=1-343"/>
</dbReference>
<dbReference type="PDB" id="8GJ3">
    <property type="method" value="EM"/>
    <property type="resolution" value="2.80 A"/>
    <property type="chains" value="A=1-343"/>
</dbReference>
<dbReference type="PDB" id="8VAL">
    <property type="method" value="EM"/>
    <property type="resolution" value="3.70 A"/>
    <property type="chains" value="A=1-343"/>
</dbReference>
<dbReference type="PDB" id="8VAM">
    <property type="method" value="EM"/>
    <property type="resolution" value="3.90 A"/>
    <property type="chains" value="A=1-333"/>
</dbReference>
<dbReference type="PDB" id="8VAN">
    <property type="method" value="EM"/>
    <property type="resolution" value="7.70 A"/>
    <property type="chains" value="A=1-343"/>
</dbReference>
<dbReference type="PDB" id="8VAP">
    <property type="method" value="EM"/>
    <property type="resolution" value="3.00 A"/>
    <property type="chains" value="A=1-333"/>
</dbReference>
<dbReference type="PDB" id="8VAQ">
    <property type="method" value="EM"/>
    <property type="resolution" value="3.80 A"/>
    <property type="chains" value="A=1-343"/>
</dbReference>
<dbReference type="PDB" id="8VAR">
    <property type="method" value="EM"/>
    <property type="resolution" value="3.90 A"/>
    <property type="chains" value="A=1-343"/>
</dbReference>
<dbReference type="PDB" id="8VAS">
    <property type="method" value="EM"/>
    <property type="resolution" value="3.80 A"/>
    <property type="chains" value="A=1-343"/>
</dbReference>
<dbReference type="PDB" id="8VAT">
    <property type="method" value="EM"/>
    <property type="resolution" value="3.20 A"/>
    <property type="chains" value="A=1-343"/>
</dbReference>
<dbReference type="PDBsum" id="1JQJ"/>
<dbReference type="PDBsum" id="1JQL"/>
<dbReference type="PDBsum" id="1JR3"/>
<dbReference type="PDBsum" id="1XXH"/>
<dbReference type="PDBsum" id="1XXI"/>
<dbReference type="PDBsum" id="3GLF"/>
<dbReference type="PDBsum" id="3GLG"/>
<dbReference type="PDBsum" id="3GLH"/>
<dbReference type="PDBsum" id="3GLI"/>
<dbReference type="PDBsum" id="8GIY"/>
<dbReference type="PDBsum" id="8GIZ"/>
<dbReference type="PDBsum" id="8GJ0"/>
<dbReference type="PDBsum" id="8GJ1"/>
<dbReference type="PDBsum" id="8GJ2"/>
<dbReference type="PDBsum" id="8GJ3"/>
<dbReference type="PDBsum" id="8VAL"/>
<dbReference type="PDBsum" id="8VAM"/>
<dbReference type="PDBsum" id="8VAN"/>
<dbReference type="PDBsum" id="8VAP"/>
<dbReference type="PDBsum" id="8VAQ"/>
<dbReference type="PDBsum" id="8VAR"/>
<dbReference type="PDBsum" id="8VAS"/>
<dbReference type="PDBsum" id="8VAT"/>
<dbReference type="EMDB" id="EMD-40079"/>
<dbReference type="EMDB" id="EMD-40080"/>
<dbReference type="EMDB" id="EMD-40081"/>
<dbReference type="EMDB" id="EMD-40082"/>
<dbReference type="EMDB" id="EMD-40083"/>
<dbReference type="EMDB" id="EMD-40084"/>
<dbReference type="EMDB" id="EMD-43094"/>
<dbReference type="EMDB" id="EMD-43095"/>
<dbReference type="EMDB" id="EMD-43096"/>
<dbReference type="EMDB" id="EMD-43098"/>
<dbReference type="EMDB" id="EMD-43099"/>
<dbReference type="EMDB" id="EMD-43100"/>
<dbReference type="EMDB" id="EMD-43101"/>
<dbReference type="EMDB" id="EMD-43102"/>
<dbReference type="SMR" id="P28630"/>
<dbReference type="BioGRID" id="4259908">
    <property type="interactions" value="201"/>
</dbReference>
<dbReference type="BioGRID" id="851889">
    <property type="interactions" value="23"/>
</dbReference>
<dbReference type="ComplexPortal" id="CPX-1926">
    <property type="entry name" value="DNA polymerase III clamp loader complex"/>
</dbReference>
<dbReference type="DIP" id="DIP-9931N"/>
<dbReference type="FunCoup" id="P28630">
    <property type="interactions" value="232"/>
</dbReference>
<dbReference type="IntAct" id="P28630">
    <property type="interactions" value="49"/>
</dbReference>
<dbReference type="STRING" id="511145.b0640"/>
<dbReference type="jPOST" id="P28630"/>
<dbReference type="PaxDb" id="511145-b0640"/>
<dbReference type="EnsemblBacteria" id="AAC73741">
    <property type="protein sequence ID" value="AAC73741"/>
    <property type="gene ID" value="b0640"/>
</dbReference>
<dbReference type="GeneID" id="75204999"/>
<dbReference type="GeneID" id="947573"/>
<dbReference type="KEGG" id="ecj:JW0635"/>
<dbReference type="KEGG" id="eco:b0640"/>
<dbReference type="KEGG" id="ecoc:C3026_03200"/>
<dbReference type="PATRIC" id="fig|1411691.4.peg.1628"/>
<dbReference type="EchoBASE" id="EB1384"/>
<dbReference type="eggNOG" id="COG1466">
    <property type="taxonomic scope" value="Bacteria"/>
</dbReference>
<dbReference type="HOGENOM" id="CLU_044694_0_2_6"/>
<dbReference type="InParanoid" id="P28630"/>
<dbReference type="OMA" id="YHWVDAL"/>
<dbReference type="OrthoDB" id="9770982at2"/>
<dbReference type="PhylomeDB" id="P28630"/>
<dbReference type="BioCyc" id="EcoCyc:EG11412-MONOMER"/>
<dbReference type="BioCyc" id="MetaCyc:EG11412-MONOMER"/>
<dbReference type="BRENDA" id="3.6.4.B8">
    <property type="organism ID" value="2026"/>
</dbReference>
<dbReference type="EvolutionaryTrace" id="P28630"/>
<dbReference type="PRO" id="PR:P28630"/>
<dbReference type="Proteomes" id="UP000000625">
    <property type="component" value="Chromosome"/>
</dbReference>
<dbReference type="GO" id="GO:0009360">
    <property type="term" value="C:DNA polymerase III complex"/>
    <property type="evidence" value="ECO:0000314"/>
    <property type="project" value="EcoCyc"/>
</dbReference>
<dbReference type="GO" id="GO:0043846">
    <property type="term" value="C:DNA polymerase III, clamp loader complex"/>
    <property type="evidence" value="ECO:0000353"/>
    <property type="project" value="ComplexPortal"/>
</dbReference>
<dbReference type="GO" id="GO:0030894">
    <property type="term" value="C:replisome"/>
    <property type="evidence" value="ECO:0000303"/>
    <property type="project" value="ComplexPortal"/>
</dbReference>
<dbReference type="GO" id="GO:0003677">
    <property type="term" value="F:DNA binding"/>
    <property type="evidence" value="ECO:0007669"/>
    <property type="project" value="InterPro"/>
</dbReference>
<dbReference type="GO" id="GO:0003689">
    <property type="term" value="F:DNA clamp loader activity"/>
    <property type="evidence" value="ECO:0000314"/>
    <property type="project" value="EcoCyc"/>
</dbReference>
<dbReference type="GO" id="GO:0003887">
    <property type="term" value="F:DNA-directed DNA polymerase activity"/>
    <property type="evidence" value="ECO:0007669"/>
    <property type="project" value="UniProtKB-KW"/>
</dbReference>
<dbReference type="GO" id="GO:0006260">
    <property type="term" value="P:DNA replication"/>
    <property type="evidence" value="ECO:0000303"/>
    <property type="project" value="ComplexPortal"/>
</dbReference>
<dbReference type="GO" id="GO:0006261">
    <property type="term" value="P:DNA-templated DNA replication"/>
    <property type="evidence" value="ECO:0000314"/>
    <property type="project" value="EcoCyc"/>
</dbReference>
<dbReference type="CDD" id="cd18138">
    <property type="entry name" value="HLD_clamp_pol_III_delta"/>
    <property type="match status" value="1"/>
</dbReference>
<dbReference type="FunFam" id="1.10.8.60:FF:000041">
    <property type="entry name" value="DNA polymerase III subunit delta"/>
    <property type="match status" value="1"/>
</dbReference>
<dbReference type="FunFam" id="3.40.50.300:FF:001093">
    <property type="entry name" value="DNA polymerase III subunit delta"/>
    <property type="match status" value="1"/>
</dbReference>
<dbReference type="FunFam" id="1.20.272.10:FF:000008">
    <property type="entry name" value="DNA polymerase III, delta subunit"/>
    <property type="match status" value="1"/>
</dbReference>
<dbReference type="Gene3D" id="1.10.8.60">
    <property type="match status" value="1"/>
</dbReference>
<dbReference type="Gene3D" id="1.20.272.10">
    <property type="match status" value="1"/>
</dbReference>
<dbReference type="Gene3D" id="3.40.50.300">
    <property type="entry name" value="P-loop containing nucleotide triphosphate hydrolases"/>
    <property type="match status" value="1"/>
</dbReference>
<dbReference type="InterPro" id="IPR008921">
    <property type="entry name" value="DNA_pol3_clamp-load_cplx_C"/>
</dbReference>
<dbReference type="InterPro" id="IPR032780">
    <property type="entry name" value="DNA_pol3_delt_C"/>
</dbReference>
<dbReference type="InterPro" id="IPR010372">
    <property type="entry name" value="DNA_pol3_delta_N"/>
</dbReference>
<dbReference type="InterPro" id="IPR005790">
    <property type="entry name" value="DNA_polIII_delta"/>
</dbReference>
<dbReference type="InterPro" id="IPR027417">
    <property type="entry name" value="P-loop_NTPase"/>
</dbReference>
<dbReference type="NCBIfam" id="TIGR01128">
    <property type="entry name" value="holA"/>
    <property type="match status" value="1"/>
</dbReference>
<dbReference type="PANTHER" id="PTHR34388">
    <property type="entry name" value="DNA POLYMERASE III SUBUNIT DELTA"/>
    <property type="match status" value="1"/>
</dbReference>
<dbReference type="PANTHER" id="PTHR34388:SF1">
    <property type="entry name" value="DNA POLYMERASE III SUBUNIT DELTA"/>
    <property type="match status" value="1"/>
</dbReference>
<dbReference type="Pfam" id="PF14840">
    <property type="entry name" value="DNA_pol3_delt_C"/>
    <property type="match status" value="1"/>
</dbReference>
<dbReference type="Pfam" id="PF06144">
    <property type="entry name" value="DNA_pol3_delta"/>
    <property type="match status" value="1"/>
</dbReference>
<dbReference type="SUPFAM" id="SSF52540">
    <property type="entry name" value="P-loop containing nucleoside triphosphate hydrolases"/>
    <property type="match status" value="1"/>
</dbReference>
<dbReference type="SUPFAM" id="SSF48019">
    <property type="entry name" value="post-AAA+ oligomerization domain-like"/>
    <property type="match status" value="1"/>
</dbReference>
<sequence>MIRLYPEQLRAQLNEGLRAAYLLLGNDPLLLQESQDAVRQVAAAQGFEEHHTFSIDPNTDWNAIFSLCQAMSLFASRQTLLLLLPENGPNAAINEQLLTLTGLLHDDLLLIVRGNKLSKAQENAAWFTALANRSVQVTCQTPEQAQLPRWVAARAKQLNLELDDAANQVLCYCYEGNLLALAQALERLSLLWPDGKLTLPRVEQAVNDAAHFTPFHWVDALLMGKSKRALHILQQLRLEGSEPVILLRTLQRELLLLVNLKRQSAHTPLRALFDKHRVWQNRRGMMGEALNRLSQTQLRQAVQLLTRTELTLKQDYGQSVWAELEGLSLLLCHKPLADVFIDG</sequence>
<evidence type="ECO:0000269" key="1">
    <source>
    </source>
</evidence>
<evidence type="ECO:0000269" key="2">
    <source>
    </source>
</evidence>
<evidence type="ECO:0000269" key="3">
    <source>
    </source>
</evidence>
<evidence type="ECO:0000269" key="4">
    <source>
    </source>
</evidence>
<evidence type="ECO:0000269" key="5">
    <source>
    </source>
</evidence>
<evidence type="ECO:0000269" key="6">
    <source>
    </source>
</evidence>
<evidence type="ECO:0000305" key="7"/>
<evidence type="ECO:0000305" key="8">
    <source>
    </source>
</evidence>
<evidence type="ECO:0007744" key="9">
    <source>
        <dbReference type="PDB" id="1JQJ"/>
    </source>
</evidence>
<evidence type="ECO:0007744" key="10">
    <source>
        <dbReference type="PDB" id="1JQL"/>
    </source>
</evidence>
<evidence type="ECO:0007744" key="11">
    <source>
        <dbReference type="PDB" id="1JR3"/>
    </source>
</evidence>
<evidence type="ECO:0007829" key="12">
    <source>
        <dbReference type="PDB" id="1JQL"/>
    </source>
</evidence>
<evidence type="ECO:0007829" key="13">
    <source>
        <dbReference type="PDB" id="3GLG"/>
    </source>
</evidence>
<evidence type="ECO:0007829" key="14">
    <source>
        <dbReference type="PDB" id="8GJ2"/>
    </source>
</evidence>
<evidence type="ECO:0007829" key="15">
    <source>
        <dbReference type="PDB" id="8VAP"/>
    </source>
</evidence>
<protein>
    <recommendedName>
        <fullName>DNA polymerase III subunit delta</fullName>
        <ecNumber>2.7.7.7</ecNumber>
    </recommendedName>
</protein>
<gene>
    <name type="primary">holA</name>
    <name type="ordered locus">b0640</name>
    <name type="ordered locus">JW0635</name>
</gene>
<comment type="function">
    <text evidence="3 6 8">Part of the beta sliding clamp loading complex, which hydrolyzes ATP to load the beta clamp onto primed DNA to form the DNA replication pre-initiation complex (PubMed:2040637). DNA polymerase III is a complex, multichain enzyme responsible for most of the replicative synthesis in bacteria. This DNA polymerase also exhibits 3'-5' exonuclease activity. The delta subunit is the wrench that will open the beta subunit dimer, which has been modeled to leave a gap large enough for ssDNA to pass through (PubMed:11525728). The gamma complex (gamma(3),delta,delta') is thought to load beta dimers onto DNA by binding ATP which alters the complex's conformation so it can bind beta sliding clamp dimers and open them at one interface. Primed DNA is recognized, ATP is hydrolyzed releasing the gamma complex and closing the beta sliding clamp ring around the primed DNA (PubMed:9927437).</text>
</comment>
<comment type="catalytic activity">
    <reaction>
        <text>DNA(n) + a 2'-deoxyribonucleoside 5'-triphosphate = DNA(n+1) + diphosphate</text>
        <dbReference type="Rhea" id="RHEA:22508"/>
        <dbReference type="Rhea" id="RHEA-COMP:17339"/>
        <dbReference type="Rhea" id="RHEA-COMP:17340"/>
        <dbReference type="ChEBI" id="CHEBI:33019"/>
        <dbReference type="ChEBI" id="CHEBI:61560"/>
        <dbReference type="ChEBI" id="CHEBI:173112"/>
        <dbReference type="EC" id="2.7.7.7"/>
    </reaction>
</comment>
<comment type="subunit">
    <text evidence="2 3 4 5 6">The DNA polymerase III holoenzyme complex contains at least 10 different subunits organized into 3 functionally essential subassemblies: the Pol III core, the beta sliding clamp processivity factor and the clamp-loading complex. The Pol III core (subunits alpha, epsilon and theta) contains the polymerase and the 3'-5' exonuclease proofreading activities (PubMed:2040637). The polymerase is tethered to the template via the dimeric beta sliding clamp processivity factor. The clamp-loading complex (also called gamma complex) assembles the beta sliding clamp onto the primed template and plays a central role in the organization and communication at the replication fork. The clamp-loading complex contains delta, delta', psi and chi, and 3 copies of either or both of two different DnaX proteins, gamma and tau. The DNA replisome complex has a single clamp loader (3 tau and 1 each of delta, delta', psi and chi subunits) which binds 3 Pol III cores (1 core on the leading strand and 2 on the lagging strand) each with a beta sliding clamp dimer. Additional proteins in the replisome are other copies of gamma, psi and chi, Ssb, DNA helicase and RNA primase (PubMed:20413500, PubMed:22157955). The clamp loader hydrolyzes ATP to assemble the beta processivity factor onto the primed template (PubMed:2040637, PubMed:9927437) and plays a central role in the organization and communication at the replication fork; the minimal complex to load the beta sliding clamp on DNA is delta, delta', gamma (PubMed:9927437).</text>
</comment>
<comment type="interaction">
    <interactant intactId="EBI-549153">
        <id>P28630</id>
    </interactant>
    <interactant intactId="EBI-549111">
        <id>P10443</id>
        <label>dnaE</label>
    </interactant>
    <organismsDiffer>false</organismsDiffer>
    <experiments>5</experiments>
</comment>
<comment type="interaction">
    <interactant intactId="EBI-549153">
        <id>P28630</id>
    </interactant>
    <interactant intactId="EBI-542385">
        <id>P0A988</id>
        <label>dnaN</label>
    </interactant>
    <organismsDiffer>false</organismsDiffer>
    <experiments>10</experiments>
</comment>
<comment type="interaction">
    <interactant intactId="EBI-549153">
        <id>P28630</id>
    </interactant>
    <interactant intactId="EBI-549131">
        <id>P03007</id>
        <label>dnaQ</label>
    </interactant>
    <organismsDiffer>false</organismsDiffer>
    <experiments>3</experiments>
</comment>
<comment type="interaction">
    <interactant intactId="EBI-549153">
        <id>P28630</id>
    </interactant>
    <interactant intactId="EBI-549140">
        <id>P06710</id>
        <label>dnaX</label>
    </interactant>
    <organismsDiffer>false</organismsDiffer>
    <experiments>19</experiments>
</comment>
<comment type="interaction">
    <interactant intactId="EBI-549153">
        <id>P28630</id>
    </interactant>
    <interactant intactId="EBI-6464728">
        <id>P06710-1</id>
        <label>dnaX</label>
    </interactant>
    <organismsDiffer>false</organismsDiffer>
    <experiments>5</experiments>
</comment>
<comment type="interaction">
    <interactant intactId="EBI-549153">
        <id>P28630</id>
    </interactant>
    <interactant intactId="EBI-2604194">
        <id>P06710-2</id>
        <label>dnaX</label>
    </interactant>
    <organismsDiffer>false</organismsDiffer>
    <experiments>6</experiments>
</comment>
<comment type="interaction">
    <interactant intactId="EBI-549153">
        <id>P28630</id>
    </interactant>
    <interactant intactId="EBI-549161">
        <id>P28631</id>
        <label>holB</label>
    </interactant>
    <organismsDiffer>false</organismsDiffer>
    <experiments>19</experiments>
</comment>
<comment type="interaction">
    <interactant intactId="EBI-549153">
        <id>P28630</id>
    </interactant>
    <interactant intactId="EBI-554913">
        <id>P23367</id>
        <label>mutL</label>
    </interactant>
    <organismsDiffer>false</organismsDiffer>
    <experiments>2</experiments>
</comment>
<comment type="interaction">
    <interactant intactId="EBI-549153">
        <id>P28630</id>
    </interactant>
    <interactant intactId="EBI-1120624">
        <id>P17117</id>
        <label>nfsA</label>
    </interactant>
    <organismsDiffer>false</organismsDiffer>
    <experiments>3</experiments>
</comment>
<comment type="interaction">
    <interactant intactId="EBI-549153">
        <id>P28630</id>
    </interactant>
    <interactant intactId="EBI-9146863">
        <id>P64526</id>
        <label>yeeW</label>
    </interactant>
    <organismsDiffer>false</organismsDiffer>
    <experiments>2</experiments>
</comment>
<comment type="domain">
    <text evidence="1">Has three domains, each of which is closely related to a corresponding domain in the delta' stator, despite the 2 proteins having only 6-8% sequence identity. Interacts with the beta sliding clamp via domain 1 (residues 1-140, in particular residues 61-74), fitting into a cleft between domains 2 and 3 on the surface of the beta-clamp (PubMed:11525728). Residues 61-74 move about 45 degrees and 5.5 Angstroms in the beta-delta versus gamma-delta-delta' structure to contact respectively the beta or delta' (PubMed:11525728).</text>
</comment>
<comment type="similarity">
    <text evidence="7">Belongs to the DNA polymerase HolA subunit family.</text>
</comment>
<name>HOLA_ECOLI</name>
<accession>P28630</accession>
<feature type="chain" id="PRO_0000105505" description="DNA polymerase III subunit delta">
    <location>
        <begin position="1"/>
        <end position="343"/>
    </location>
</feature>
<feature type="region of interest" description="Domain 1" evidence="8">
    <location>
        <begin position="1"/>
        <end position="140"/>
    </location>
</feature>
<feature type="region of interest" description="Domain 2" evidence="8">
    <location>
        <begin position="141"/>
        <end position="210"/>
    </location>
</feature>
<feature type="region of interest" description="Domain 3" evidence="8">
    <location>
        <begin position="211"/>
        <end position="343"/>
    </location>
</feature>
<feature type="strand" evidence="14">
    <location>
        <begin position="2"/>
        <end position="4"/>
    </location>
</feature>
<feature type="helix" evidence="12">
    <location>
        <begin position="6"/>
        <end position="8"/>
    </location>
</feature>
<feature type="helix" evidence="12">
    <location>
        <begin position="9"/>
        <end position="15"/>
    </location>
</feature>
<feature type="strand" evidence="12">
    <location>
        <begin position="19"/>
        <end position="26"/>
    </location>
</feature>
<feature type="helix" evidence="12">
    <location>
        <begin position="28"/>
        <end position="44"/>
    </location>
</feature>
<feature type="strand" evidence="12">
    <location>
        <begin position="49"/>
        <end position="51"/>
    </location>
</feature>
<feature type="strand" evidence="15">
    <location>
        <begin position="52"/>
        <end position="54"/>
    </location>
</feature>
<feature type="strand" evidence="14">
    <location>
        <begin position="56"/>
        <end position="58"/>
    </location>
</feature>
<feature type="helix" evidence="12">
    <location>
        <begin position="61"/>
        <end position="69"/>
    </location>
</feature>
<feature type="strand" evidence="13">
    <location>
        <begin position="73"/>
        <end position="76"/>
    </location>
</feature>
<feature type="strand" evidence="12">
    <location>
        <begin position="78"/>
        <end position="83"/>
    </location>
</feature>
<feature type="helix" evidence="12">
    <location>
        <begin position="93"/>
        <end position="103"/>
    </location>
</feature>
<feature type="strand" evidence="13">
    <location>
        <begin position="106"/>
        <end position="108"/>
    </location>
</feature>
<feature type="strand" evidence="12">
    <location>
        <begin position="110"/>
        <end position="113"/>
    </location>
</feature>
<feature type="helix" evidence="12">
    <location>
        <begin position="121"/>
        <end position="123"/>
    </location>
</feature>
<feature type="helix" evidence="12">
    <location>
        <begin position="125"/>
        <end position="130"/>
    </location>
</feature>
<feature type="helix" evidence="12">
    <location>
        <begin position="131"/>
        <end position="133"/>
    </location>
</feature>
<feature type="strand" evidence="12">
    <location>
        <begin position="135"/>
        <end position="138"/>
    </location>
</feature>
<feature type="turn" evidence="14">
    <location>
        <begin position="144"/>
        <end position="146"/>
    </location>
</feature>
<feature type="helix" evidence="14">
    <location>
        <begin position="147"/>
        <end position="157"/>
    </location>
</feature>
<feature type="helix" evidence="14">
    <location>
        <begin position="164"/>
        <end position="173"/>
    </location>
</feature>
<feature type="turn" evidence="14">
    <location>
        <begin position="174"/>
        <end position="176"/>
    </location>
</feature>
<feature type="helix" evidence="14">
    <location>
        <begin position="178"/>
        <end position="191"/>
    </location>
</feature>
<feature type="helix" evidence="14">
    <location>
        <begin position="199"/>
        <end position="204"/>
    </location>
</feature>
<feature type="helix" evidence="14">
    <location>
        <begin position="214"/>
        <end position="223"/>
    </location>
</feature>
<feature type="helix" evidence="14">
    <location>
        <begin position="226"/>
        <end position="239"/>
    </location>
</feature>
<feature type="helix" evidence="14">
    <location>
        <begin position="243"/>
        <end position="263"/>
    </location>
</feature>
<feature type="turn" evidence="14">
    <location>
        <begin position="264"/>
        <end position="266"/>
    </location>
</feature>
<feature type="helix" evidence="14">
    <location>
        <begin position="269"/>
        <end position="276"/>
    </location>
</feature>
<feature type="turn" evidence="14">
    <location>
        <begin position="280"/>
        <end position="282"/>
    </location>
</feature>
<feature type="helix" evidence="14">
    <location>
        <begin position="283"/>
        <end position="290"/>
    </location>
</feature>
<feature type="turn" evidence="14">
    <location>
        <begin position="297"/>
        <end position="299"/>
    </location>
</feature>
<feature type="helix" evidence="14">
    <location>
        <begin position="300"/>
        <end position="313"/>
    </location>
</feature>
<feature type="helix" evidence="14">
    <location>
        <begin position="320"/>
        <end position="331"/>
    </location>
</feature>
<feature type="turn" evidence="14">
    <location>
        <begin position="339"/>
        <end position="342"/>
    </location>
</feature>
<proteinExistence type="evidence at protein level"/>
<reference key="1">
    <citation type="journal article" date="1993" name="J. Biol. Chem.">
        <title>DNA polymerase III accessory proteins. I. holA and holB encoding delta and delta'.</title>
        <authorList>
            <person name="Dong Z."/>
            <person name="Onrust R."/>
            <person name="Skangalis M."/>
            <person name="O'Donnell M."/>
        </authorList>
    </citation>
    <scope>NUCLEOTIDE SEQUENCE [GENOMIC DNA]</scope>
    <source>
        <strain>K12</strain>
    </source>
</reference>
<reference key="2">
    <citation type="journal article" date="1992" name="J. Bacteriol.">
        <title>Molecular cloning, sequencing, and overexpression of the structural gene encoding the delta subunit of Escherichia coli DNA polymerase III holoenzyme.</title>
        <authorList>
            <person name="Carter J.R."/>
            <person name="Franden M.A."/>
            <person name="Aebersold R.H."/>
            <person name="McHenry C.S."/>
        </authorList>
    </citation>
    <scope>NUCLEOTIDE SEQUENCE [GENOMIC DNA]</scope>
    <scope>PARTIAL PROTEIN SEQUENCE</scope>
    <source>
        <strain>K12 / MG1655 / ATCC 47076</strain>
    </source>
</reference>
<reference key="3">
    <citation type="journal article" date="1996" name="DNA Res.">
        <title>A 718-kb DNA sequence of the Escherichia coli K-12 genome corresponding to the 12.7-28.0 min region on the linkage map.</title>
        <authorList>
            <person name="Oshima T."/>
            <person name="Aiba H."/>
            <person name="Baba T."/>
            <person name="Fujita K."/>
            <person name="Hayashi K."/>
            <person name="Honjo A."/>
            <person name="Ikemoto K."/>
            <person name="Inada T."/>
            <person name="Itoh T."/>
            <person name="Kajihara M."/>
            <person name="Kanai K."/>
            <person name="Kashimoto K."/>
            <person name="Kimura S."/>
            <person name="Kitagawa M."/>
            <person name="Makino K."/>
            <person name="Masuda S."/>
            <person name="Miki T."/>
            <person name="Mizobuchi K."/>
            <person name="Mori H."/>
            <person name="Motomura K."/>
            <person name="Nakamura Y."/>
            <person name="Nashimoto H."/>
            <person name="Nishio Y."/>
            <person name="Saito N."/>
            <person name="Sampei G."/>
            <person name="Seki Y."/>
            <person name="Tagami H."/>
            <person name="Takemoto K."/>
            <person name="Wada C."/>
            <person name="Yamamoto Y."/>
            <person name="Yano M."/>
            <person name="Horiuchi T."/>
        </authorList>
    </citation>
    <scope>NUCLEOTIDE SEQUENCE [LARGE SCALE GENOMIC DNA]</scope>
    <source>
        <strain>K12 / W3110 / ATCC 27325 / DSM 5911</strain>
    </source>
</reference>
<reference key="4">
    <citation type="submission" date="1997-01" db="EMBL/GenBank/DDBJ databases">
        <title>Sequence of minutes 4-25 of Escherichia coli.</title>
        <authorList>
            <person name="Chung E."/>
            <person name="Allen E."/>
            <person name="Araujo R."/>
            <person name="Aparicio A.M."/>
            <person name="Davis K."/>
            <person name="Duncan M."/>
            <person name="Federspiel N."/>
            <person name="Hyman R."/>
            <person name="Kalman S."/>
            <person name="Komp C."/>
            <person name="Kurdi O."/>
            <person name="Lew H."/>
            <person name="Lin D."/>
            <person name="Namath A."/>
            <person name="Oefner P."/>
            <person name="Roberts D."/>
            <person name="Schramm S."/>
            <person name="Davis R.W."/>
        </authorList>
    </citation>
    <scope>NUCLEOTIDE SEQUENCE [LARGE SCALE GENOMIC DNA]</scope>
    <source>
        <strain>K12 / MG1655 / ATCC 47076</strain>
    </source>
</reference>
<reference key="5">
    <citation type="journal article" date="1997" name="Science">
        <title>The complete genome sequence of Escherichia coli K-12.</title>
        <authorList>
            <person name="Blattner F.R."/>
            <person name="Plunkett G. III"/>
            <person name="Bloch C.A."/>
            <person name="Perna N.T."/>
            <person name="Burland V."/>
            <person name="Riley M."/>
            <person name="Collado-Vides J."/>
            <person name="Glasner J.D."/>
            <person name="Rode C.K."/>
            <person name="Mayhew G.F."/>
            <person name="Gregor J."/>
            <person name="Davis N.W."/>
            <person name="Kirkpatrick H.A."/>
            <person name="Goeden M.A."/>
            <person name="Rose D.J."/>
            <person name="Mau B."/>
            <person name="Shao Y."/>
        </authorList>
    </citation>
    <scope>NUCLEOTIDE SEQUENCE [LARGE SCALE GENOMIC DNA]</scope>
    <source>
        <strain>K12 / MG1655 / ATCC 47076</strain>
    </source>
</reference>
<reference key="6">
    <citation type="journal article" date="2006" name="Mol. Syst. Biol.">
        <title>Highly accurate genome sequences of Escherichia coli K-12 strains MG1655 and W3110.</title>
        <authorList>
            <person name="Hayashi K."/>
            <person name="Morooka N."/>
            <person name="Yamamoto Y."/>
            <person name="Fujita K."/>
            <person name="Isono K."/>
            <person name="Choi S."/>
            <person name="Ohtsubo E."/>
            <person name="Baba T."/>
            <person name="Wanner B.L."/>
            <person name="Mori H."/>
            <person name="Horiuchi T."/>
        </authorList>
    </citation>
    <scope>NUCLEOTIDE SEQUENCE [LARGE SCALE GENOMIC DNA]</scope>
    <source>
        <strain>K12 / W3110 / ATCC 27325 / DSM 5911</strain>
    </source>
</reference>
<reference key="7">
    <citation type="journal article" date="1987" name="J. Bacteriol.">
        <title>Genes encoding two lipoproteins in the leuS-dacA region of the Escherichia coli chromosome.</title>
        <authorList>
            <person name="Takase I."/>
            <person name="Ishino F."/>
            <person name="Wachi M."/>
            <person name="Kamata H."/>
            <person name="Doi M."/>
            <person name="Asoh S."/>
            <person name="Matsuzawa H."/>
            <person name="Ohta T."/>
            <person name="Matsuhashi M."/>
        </authorList>
    </citation>
    <scope>PRELIMINARY NUCLEOTIDE SEQUENCE [GENOMIC DNA] OF 1-49</scope>
    <source>
        <strain>K12</strain>
    </source>
</reference>
<reference key="8">
    <citation type="journal article" date="1991" name="J. Biol. Chem.">
        <title>Mechanism of the sliding beta-clamp of DNA polymerase III holoenzyme.</title>
        <authorList>
            <person name="Stukenberg P.T."/>
            <person name="Studwell-Vaughan P.S."/>
            <person name="O'Donnell M."/>
        </authorList>
    </citation>
    <scope>FUNCTION</scope>
    <scope>SUBUNIT</scope>
</reference>
<reference key="9">
    <citation type="journal article" date="1993" name="J. Biol. Chem.">
        <title>DNA polymerase III accessory proteins. II. Characterization of delta and delta'.</title>
        <authorList>
            <person name="Onrust R."/>
            <person name="O'Donnell M."/>
        </authorList>
    </citation>
    <scope>CHARACTERIZATION</scope>
</reference>
<reference key="10">
    <citation type="journal article" date="1992" name="Bioessays">
        <title>Accessory protein function in the DNA polymerase III holoenzyme from E. coli.</title>
        <authorList>
            <person name="O'Donnell M."/>
        </authorList>
    </citation>
    <scope>REVIEW</scope>
</reference>
<reference key="11">
    <citation type="journal article" date="1997" name="Electrophoresis">
        <title>Escherichia coli proteome analysis using the gene-protein database.</title>
        <authorList>
            <person name="VanBogelen R.A."/>
            <person name="Abshire K.Z."/>
            <person name="Moldover B."/>
            <person name="Olson E.R."/>
            <person name="Neidhardt F.C."/>
        </authorList>
    </citation>
    <scope>IDENTIFICATION BY 2D-GEL</scope>
</reference>
<reference key="12">
    <citation type="journal article" date="1999" name="EMBO J.">
        <title>The internal workings of a DNA polymerase clamp-loading machine.</title>
        <authorList>
            <person name="Turner J."/>
            <person name="Hingorani M.M."/>
            <person name="Kelman Z."/>
            <person name="O'Donnell M."/>
        </authorList>
    </citation>
    <scope>FUNCTION</scope>
    <scope>SUBUNIT</scope>
</reference>
<reference key="13">
    <citation type="journal article" date="2010" name="Science">
        <title>Stoichiometry and architecture of active DNA replication machinery in Escherichia coli.</title>
        <authorList>
            <person name="Reyes-Lamothe R."/>
            <person name="Sherratt D.J."/>
            <person name="Leake M.C."/>
        </authorList>
    </citation>
    <scope>REPLISOME COMPLEX</scope>
    <scope>SUBUNIT</scope>
</reference>
<reference key="14">
    <citation type="journal article" date="2011" name="Nat. Struct. Mol. Biol.">
        <title>Single-molecule studies reveal the function of a third polymerase in the replisome.</title>
        <authorList>
            <person name="Georgescu R.E."/>
            <person name="Kurth I."/>
            <person name="O'Donnell M.E."/>
        </authorList>
    </citation>
    <scope>REPLISOME COMPLEX</scope>
    <scope>SUBUNIT</scope>
</reference>
<reference evidence="9 10" key="15">
    <citation type="journal article" date="2001" name="Cell">
        <title>Mechanism of processivity clamp opening by the delta subunit wrench of the clamp loader complex of E. coli DNA polymerase III.</title>
        <authorList>
            <person name="Jeruzalmi D."/>
            <person name="Yurieva O."/>
            <person name="Zhao Y."/>
            <person name="Young M."/>
            <person name="Stewart J."/>
            <person name="Hingorani M."/>
            <person name="O'Donnell M."/>
            <person name="Kuriyan J."/>
        </authorList>
    </citation>
    <scope>X-RAY CRYSTALLOGRAPHY (2.50 ANGSTROMS) IN COMPLEX WITH BETA SLIDING-CLAMP (DNAN)</scope>
    <scope>FUNCTION</scope>
    <scope>DOMAIN</scope>
</reference>
<reference evidence="11" key="16">
    <citation type="journal article" date="2001" name="Cell">
        <title>Crystal structure of the processivity clamp loader gamma (gamma) complex of E. coli DNA polymerase III.</title>
        <authorList>
            <person name="Jeruzalmi D."/>
            <person name="O'Donnell M."/>
            <person name="Kuriyan J."/>
        </authorList>
    </citation>
    <scope>X-RAY CRYSTALLOGRAPHY (2.70 ANGSTROMS) IN COMPLEX WITH HOLB AND DNAX (ISOFORM GAMMA)</scope>
</reference>
<organism>
    <name type="scientific">Escherichia coli (strain K12)</name>
    <dbReference type="NCBI Taxonomy" id="83333"/>
    <lineage>
        <taxon>Bacteria</taxon>
        <taxon>Pseudomonadati</taxon>
        <taxon>Pseudomonadota</taxon>
        <taxon>Gammaproteobacteria</taxon>
        <taxon>Enterobacterales</taxon>
        <taxon>Enterobacteriaceae</taxon>
        <taxon>Escherichia</taxon>
    </lineage>
</organism>